<sequence>MINDLISDSLTRIRNAGMRRLETTQLLHSKVIEALLGIFQAKGYIESFNVIEENKKKFINVVLKYDEKGKSVINEVKRVSKPGRRVYKGKDEIKRFKNGYGTIVVSTSKGVLANDEAYKAGVGGEVLCTIW</sequence>
<comment type="function">
    <text evidence="1">One of the primary rRNA binding proteins, it binds directly to 16S rRNA central domain where it helps coordinate assembly of the platform of the 30S subunit.</text>
</comment>
<comment type="subunit">
    <text evidence="1">Part of the 30S ribosomal subunit. Contacts proteins S5 and S12.</text>
</comment>
<comment type="similarity">
    <text evidence="1">Belongs to the universal ribosomal protein uS8 family.</text>
</comment>
<feature type="chain" id="PRO_1000165315" description="Small ribosomal subunit protein uS8">
    <location>
        <begin position="1"/>
        <end position="131"/>
    </location>
</feature>
<evidence type="ECO:0000255" key="1">
    <source>
        <dbReference type="HAMAP-Rule" id="MF_01302"/>
    </source>
</evidence>
<evidence type="ECO:0000305" key="2"/>
<name>RS8_CAMLR</name>
<reference key="1">
    <citation type="journal article" date="2008" name="Foodborne Pathog. Dis.">
        <title>The complete genome sequence and analysis of the human pathogen Campylobacter lari.</title>
        <authorList>
            <person name="Miller W.G."/>
            <person name="Wang G."/>
            <person name="Binnewies T.T."/>
            <person name="Parker C.T."/>
        </authorList>
    </citation>
    <scope>NUCLEOTIDE SEQUENCE [LARGE SCALE GENOMIC DNA]</scope>
    <source>
        <strain>RM2100 / D67 / ATCC BAA-1060</strain>
    </source>
</reference>
<accession>B9KEF4</accession>
<gene>
    <name evidence="1" type="primary">rpsH</name>
    <name type="ordered locus">Cla_0073</name>
</gene>
<protein>
    <recommendedName>
        <fullName evidence="1">Small ribosomal subunit protein uS8</fullName>
    </recommendedName>
    <alternativeName>
        <fullName evidence="2">30S ribosomal protein S8</fullName>
    </alternativeName>
</protein>
<keyword id="KW-1185">Reference proteome</keyword>
<keyword id="KW-0687">Ribonucleoprotein</keyword>
<keyword id="KW-0689">Ribosomal protein</keyword>
<keyword id="KW-0694">RNA-binding</keyword>
<keyword id="KW-0699">rRNA-binding</keyword>
<dbReference type="EMBL" id="CP000932">
    <property type="protein sequence ID" value="ACM63439.1"/>
    <property type="molecule type" value="Genomic_DNA"/>
</dbReference>
<dbReference type="RefSeq" id="WP_012660825.1">
    <property type="nucleotide sequence ID" value="NC_012039.1"/>
</dbReference>
<dbReference type="SMR" id="B9KEF4"/>
<dbReference type="STRING" id="306263.Cla_0073"/>
<dbReference type="KEGG" id="cla:CLA_0073"/>
<dbReference type="PATRIC" id="fig|306263.5.peg.72"/>
<dbReference type="eggNOG" id="COG0096">
    <property type="taxonomic scope" value="Bacteria"/>
</dbReference>
<dbReference type="HOGENOM" id="CLU_098428_0_2_7"/>
<dbReference type="Proteomes" id="UP000007727">
    <property type="component" value="Chromosome"/>
</dbReference>
<dbReference type="GO" id="GO:1990904">
    <property type="term" value="C:ribonucleoprotein complex"/>
    <property type="evidence" value="ECO:0007669"/>
    <property type="project" value="UniProtKB-KW"/>
</dbReference>
<dbReference type="GO" id="GO:0005840">
    <property type="term" value="C:ribosome"/>
    <property type="evidence" value="ECO:0007669"/>
    <property type="project" value="UniProtKB-KW"/>
</dbReference>
<dbReference type="GO" id="GO:0019843">
    <property type="term" value="F:rRNA binding"/>
    <property type="evidence" value="ECO:0007669"/>
    <property type="project" value="UniProtKB-UniRule"/>
</dbReference>
<dbReference type="GO" id="GO:0003735">
    <property type="term" value="F:structural constituent of ribosome"/>
    <property type="evidence" value="ECO:0007669"/>
    <property type="project" value="InterPro"/>
</dbReference>
<dbReference type="GO" id="GO:0006412">
    <property type="term" value="P:translation"/>
    <property type="evidence" value="ECO:0007669"/>
    <property type="project" value="UniProtKB-UniRule"/>
</dbReference>
<dbReference type="FunFam" id="3.30.1370.30:FF:000002">
    <property type="entry name" value="30S ribosomal protein S8"/>
    <property type="match status" value="1"/>
</dbReference>
<dbReference type="FunFam" id="3.30.1490.10:FF:000001">
    <property type="entry name" value="30S ribosomal protein S8"/>
    <property type="match status" value="1"/>
</dbReference>
<dbReference type="Gene3D" id="3.30.1370.30">
    <property type="match status" value="1"/>
</dbReference>
<dbReference type="Gene3D" id="3.30.1490.10">
    <property type="match status" value="1"/>
</dbReference>
<dbReference type="HAMAP" id="MF_01302_B">
    <property type="entry name" value="Ribosomal_uS8_B"/>
    <property type="match status" value="1"/>
</dbReference>
<dbReference type="InterPro" id="IPR000630">
    <property type="entry name" value="Ribosomal_uS8"/>
</dbReference>
<dbReference type="InterPro" id="IPR047863">
    <property type="entry name" value="Ribosomal_uS8_CS"/>
</dbReference>
<dbReference type="InterPro" id="IPR035987">
    <property type="entry name" value="Ribosomal_uS8_sf"/>
</dbReference>
<dbReference type="NCBIfam" id="NF001109">
    <property type="entry name" value="PRK00136.1"/>
    <property type="match status" value="1"/>
</dbReference>
<dbReference type="PANTHER" id="PTHR11758">
    <property type="entry name" value="40S RIBOSOMAL PROTEIN S15A"/>
    <property type="match status" value="1"/>
</dbReference>
<dbReference type="Pfam" id="PF00410">
    <property type="entry name" value="Ribosomal_S8"/>
    <property type="match status" value="1"/>
</dbReference>
<dbReference type="SUPFAM" id="SSF56047">
    <property type="entry name" value="Ribosomal protein S8"/>
    <property type="match status" value="1"/>
</dbReference>
<dbReference type="PROSITE" id="PS00053">
    <property type="entry name" value="RIBOSOMAL_S8"/>
    <property type="match status" value="1"/>
</dbReference>
<organism>
    <name type="scientific">Campylobacter lari (strain RM2100 / D67 / ATCC BAA-1060)</name>
    <dbReference type="NCBI Taxonomy" id="306263"/>
    <lineage>
        <taxon>Bacteria</taxon>
        <taxon>Pseudomonadati</taxon>
        <taxon>Campylobacterota</taxon>
        <taxon>Epsilonproteobacteria</taxon>
        <taxon>Campylobacterales</taxon>
        <taxon>Campylobacteraceae</taxon>
        <taxon>Campylobacter</taxon>
    </lineage>
</organism>
<proteinExistence type="inferred from homology"/>